<keyword id="KW-0963">Cytoplasm</keyword>
<keyword id="KW-0448">Lipopolysaccharide biosynthesis</keyword>
<keyword id="KW-0548">Nucleotidyltransferase</keyword>
<keyword id="KW-0808">Transferase</keyword>
<name>KDSB_ECO5E</name>
<reference key="1">
    <citation type="journal article" date="2011" name="Proc. Natl. Acad. Sci. U.S.A.">
        <title>Genomic anatomy of Escherichia coli O157:H7 outbreaks.</title>
        <authorList>
            <person name="Eppinger M."/>
            <person name="Mammel M.K."/>
            <person name="Leclerc J.E."/>
            <person name="Ravel J."/>
            <person name="Cebula T.A."/>
        </authorList>
    </citation>
    <scope>NUCLEOTIDE SEQUENCE [LARGE SCALE GENOMIC DNA]</scope>
    <source>
        <strain>EC4115 / EHEC</strain>
    </source>
</reference>
<evidence type="ECO:0000255" key="1">
    <source>
        <dbReference type="HAMAP-Rule" id="MF_00057"/>
    </source>
</evidence>
<comment type="function">
    <text evidence="1">Activates KDO (a required 8-carbon sugar) for incorporation into bacterial lipopolysaccharide in Gram-negative bacteria.</text>
</comment>
<comment type="catalytic activity">
    <reaction evidence="1">
        <text>3-deoxy-alpha-D-manno-oct-2-ulosonate + CTP = CMP-3-deoxy-beta-D-manno-octulosonate + diphosphate</text>
        <dbReference type="Rhea" id="RHEA:23448"/>
        <dbReference type="ChEBI" id="CHEBI:33019"/>
        <dbReference type="ChEBI" id="CHEBI:37563"/>
        <dbReference type="ChEBI" id="CHEBI:85986"/>
        <dbReference type="ChEBI" id="CHEBI:85987"/>
        <dbReference type="EC" id="2.7.7.38"/>
    </reaction>
</comment>
<comment type="pathway">
    <text evidence="1">Nucleotide-sugar biosynthesis; CMP-3-deoxy-D-manno-octulosonate biosynthesis; CMP-3-deoxy-D-manno-octulosonate from 3-deoxy-D-manno-octulosonate and CTP: step 1/1.</text>
</comment>
<comment type="pathway">
    <text evidence="1">Bacterial outer membrane biogenesis; lipopolysaccharide biosynthesis.</text>
</comment>
<comment type="subcellular location">
    <subcellularLocation>
        <location evidence="1">Cytoplasm</location>
    </subcellularLocation>
</comment>
<comment type="similarity">
    <text evidence="1">Belongs to the KdsB family.</text>
</comment>
<organism>
    <name type="scientific">Escherichia coli O157:H7 (strain EC4115 / EHEC)</name>
    <dbReference type="NCBI Taxonomy" id="444450"/>
    <lineage>
        <taxon>Bacteria</taxon>
        <taxon>Pseudomonadati</taxon>
        <taxon>Pseudomonadota</taxon>
        <taxon>Gammaproteobacteria</taxon>
        <taxon>Enterobacterales</taxon>
        <taxon>Enterobacteriaceae</taxon>
        <taxon>Escherichia</taxon>
    </lineage>
</organism>
<accession>B5YT52</accession>
<gene>
    <name evidence="1" type="primary">kdsB</name>
    <name type="ordered locus">ECH74115_1079</name>
</gene>
<feature type="chain" id="PRO_1000091868" description="3-deoxy-manno-octulosonate cytidylyltransferase">
    <location>
        <begin position="1"/>
        <end position="248"/>
    </location>
</feature>
<proteinExistence type="inferred from homology"/>
<sequence length="248" mass="27610">MSFVVIIPARYASTRLPGKPLVDINGKPMIVHVLERARESGAERIIVATDHEDVARAVEAAGGEVCMTRADHQSGTERLAEVVEKCAFSDDTVIVNVQGDEPMIPATIIRQVADNLAQRQVGMATLAVPIHNAEEAFNPNAVKVVLDAEGYALYFSRATIPWDRDRFAKGLETVGDNFLRHLGIYGYRAGFIRRYVTWQPSPLEHIEMLEQLRVLWYGEKIHVAVAHEVPGTGVDTPEDLERVRAEMR</sequence>
<protein>
    <recommendedName>
        <fullName evidence="1">3-deoxy-manno-octulosonate cytidylyltransferase</fullName>
        <ecNumber evidence="1">2.7.7.38</ecNumber>
    </recommendedName>
    <alternativeName>
        <fullName evidence="1">CMP-2-keto-3-deoxyoctulosonic acid synthase</fullName>
        <shortName evidence="1">CKS</shortName>
        <shortName evidence="1">CMP-KDO synthase</shortName>
    </alternativeName>
</protein>
<dbReference type="EC" id="2.7.7.38" evidence="1"/>
<dbReference type="EMBL" id="CP001164">
    <property type="protein sequence ID" value="ACI38013.1"/>
    <property type="molecule type" value="Genomic_DNA"/>
</dbReference>
<dbReference type="RefSeq" id="WP_000011613.1">
    <property type="nucleotide sequence ID" value="NC_011353.1"/>
</dbReference>
<dbReference type="SMR" id="B5YT52"/>
<dbReference type="GeneID" id="75170992"/>
<dbReference type="KEGG" id="ecf:ECH74115_1079"/>
<dbReference type="HOGENOM" id="CLU_065038_1_0_6"/>
<dbReference type="UniPathway" id="UPA00030"/>
<dbReference type="UniPathway" id="UPA00358">
    <property type="reaction ID" value="UER00476"/>
</dbReference>
<dbReference type="GO" id="GO:0005829">
    <property type="term" value="C:cytosol"/>
    <property type="evidence" value="ECO:0007669"/>
    <property type="project" value="TreeGrafter"/>
</dbReference>
<dbReference type="GO" id="GO:0008690">
    <property type="term" value="F:3-deoxy-manno-octulosonate cytidylyltransferase activity"/>
    <property type="evidence" value="ECO:0007669"/>
    <property type="project" value="UniProtKB-UniRule"/>
</dbReference>
<dbReference type="GO" id="GO:0033468">
    <property type="term" value="P:CMP-keto-3-deoxy-D-manno-octulosonic acid biosynthetic process"/>
    <property type="evidence" value="ECO:0007669"/>
    <property type="project" value="UniProtKB-UniRule"/>
</dbReference>
<dbReference type="GO" id="GO:0009103">
    <property type="term" value="P:lipopolysaccharide biosynthetic process"/>
    <property type="evidence" value="ECO:0007669"/>
    <property type="project" value="UniProtKB-UniRule"/>
</dbReference>
<dbReference type="CDD" id="cd02517">
    <property type="entry name" value="CMP-KDO-Synthetase"/>
    <property type="match status" value="1"/>
</dbReference>
<dbReference type="FunFam" id="3.90.550.10:FF:000011">
    <property type="entry name" value="3-deoxy-manno-octulosonate cytidylyltransferase"/>
    <property type="match status" value="1"/>
</dbReference>
<dbReference type="Gene3D" id="3.90.550.10">
    <property type="entry name" value="Spore Coat Polysaccharide Biosynthesis Protein SpsA, Chain A"/>
    <property type="match status" value="1"/>
</dbReference>
<dbReference type="HAMAP" id="MF_00057">
    <property type="entry name" value="KdsB"/>
    <property type="match status" value="1"/>
</dbReference>
<dbReference type="InterPro" id="IPR003329">
    <property type="entry name" value="Cytidylyl_trans"/>
</dbReference>
<dbReference type="InterPro" id="IPR004528">
    <property type="entry name" value="KdsB"/>
</dbReference>
<dbReference type="InterPro" id="IPR029044">
    <property type="entry name" value="Nucleotide-diphossugar_trans"/>
</dbReference>
<dbReference type="NCBIfam" id="TIGR00466">
    <property type="entry name" value="kdsB"/>
    <property type="match status" value="1"/>
</dbReference>
<dbReference type="NCBIfam" id="NF003950">
    <property type="entry name" value="PRK05450.1-3"/>
    <property type="match status" value="1"/>
</dbReference>
<dbReference type="NCBIfam" id="NF003952">
    <property type="entry name" value="PRK05450.1-5"/>
    <property type="match status" value="1"/>
</dbReference>
<dbReference type="NCBIfam" id="NF009905">
    <property type="entry name" value="PRK13368.1"/>
    <property type="match status" value="1"/>
</dbReference>
<dbReference type="PANTHER" id="PTHR42866">
    <property type="entry name" value="3-DEOXY-MANNO-OCTULOSONATE CYTIDYLYLTRANSFERASE"/>
    <property type="match status" value="1"/>
</dbReference>
<dbReference type="PANTHER" id="PTHR42866:SF2">
    <property type="entry name" value="3-DEOXY-MANNO-OCTULOSONATE CYTIDYLYLTRANSFERASE, MITOCHONDRIAL"/>
    <property type="match status" value="1"/>
</dbReference>
<dbReference type="Pfam" id="PF02348">
    <property type="entry name" value="CTP_transf_3"/>
    <property type="match status" value="1"/>
</dbReference>
<dbReference type="SUPFAM" id="SSF53448">
    <property type="entry name" value="Nucleotide-diphospho-sugar transferases"/>
    <property type="match status" value="1"/>
</dbReference>